<reference key="1">
    <citation type="journal article" date="1994" name="J. Mol. Biol.">
        <title>Complete sequence of the mitochondrial DNA of the chlorophyte alga Prototheca wickerhamii. Gene content and genome organization.</title>
        <authorList>
            <person name="Wolff G."/>
            <person name="Plante I."/>
            <person name="Lang B.F."/>
            <person name="Kueck U."/>
            <person name="Burger G."/>
        </authorList>
    </citation>
    <scope>NUCLEOTIDE SEQUENCE [GENOMIC DNA]</scope>
    <source>
        <strain>263-11</strain>
    </source>
</reference>
<proteinExistence type="inferred from homology"/>
<dbReference type="EC" id="7.1.1.2"/>
<dbReference type="EMBL" id="U02970">
    <property type="protein sequence ID" value="AAD12655.1"/>
    <property type="molecule type" value="Genomic_DNA"/>
</dbReference>
<dbReference type="PIR" id="T11936">
    <property type="entry name" value="T11936"/>
</dbReference>
<dbReference type="RefSeq" id="NP_042267.1">
    <property type="nucleotide sequence ID" value="NC_001613.1"/>
</dbReference>
<dbReference type="SMR" id="Q37627"/>
<dbReference type="GeneID" id="802092"/>
<dbReference type="GO" id="GO:0031966">
    <property type="term" value="C:mitochondrial membrane"/>
    <property type="evidence" value="ECO:0007669"/>
    <property type="project" value="UniProtKB-SubCell"/>
</dbReference>
<dbReference type="GO" id="GO:0030964">
    <property type="term" value="C:NADH dehydrogenase complex"/>
    <property type="evidence" value="ECO:0007669"/>
    <property type="project" value="TreeGrafter"/>
</dbReference>
<dbReference type="GO" id="GO:0008137">
    <property type="term" value="F:NADH dehydrogenase (ubiquinone) activity"/>
    <property type="evidence" value="ECO:0007669"/>
    <property type="project" value="UniProtKB-EC"/>
</dbReference>
<dbReference type="GO" id="GO:0042773">
    <property type="term" value="P:ATP synthesis coupled electron transport"/>
    <property type="evidence" value="ECO:0007669"/>
    <property type="project" value="InterPro"/>
</dbReference>
<dbReference type="FunFam" id="1.10.287.3510:FF:000001">
    <property type="entry name" value="NADH-quinone oxidoreductase subunit K"/>
    <property type="match status" value="1"/>
</dbReference>
<dbReference type="Gene3D" id="1.10.287.3510">
    <property type="match status" value="1"/>
</dbReference>
<dbReference type="HAMAP" id="MF_01456">
    <property type="entry name" value="NDH1_NuoK"/>
    <property type="match status" value="1"/>
</dbReference>
<dbReference type="InterPro" id="IPR001133">
    <property type="entry name" value="NADH_UbQ_OxRdtase_chain4L/K"/>
</dbReference>
<dbReference type="InterPro" id="IPR039428">
    <property type="entry name" value="NUOK/Mnh_C1-like"/>
</dbReference>
<dbReference type="NCBIfam" id="NF004320">
    <property type="entry name" value="PRK05715.1-2"/>
    <property type="match status" value="1"/>
</dbReference>
<dbReference type="NCBIfam" id="NF004321">
    <property type="entry name" value="PRK05715.1-3"/>
    <property type="match status" value="1"/>
</dbReference>
<dbReference type="NCBIfam" id="NF004323">
    <property type="entry name" value="PRK05715.1-5"/>
    <property type="match status" value="1"/>
</dbReference>
<dbReference type="PANTHER" id="PTHR11434:SF21">
    <property type="entry name" value="NADH DEHYDROGENASE SUBUNIT 4L-RELATED"/>
    <property type="match status" value="1"/>
</dbReference>
<dbReference type="PANTHER" id="PTHR11434">
    <property type="entry name" value="NADH-UBIQUINONE OXIDOREDUCTASE SUBUNIT ND4L"/>
    <property type="match status" value="1"/>
</dbReference>
<dbReference type="Pfam" id="PF00420">
    <property type="entry name" value="Oxidored_q2"/>
    <property type="match status" value="1"/>
</dbReference>
<evidence type="ECO:0000250" key="1"/>
<evidence type="ECO:0000255" key="2"/>
<evidence type="ECO:0000305" key="3"/>
<keyword id="KW-0249">Electron transport</keyword>
<keyword id="KW-0472">Membrane</keyword>
<keyword id="KW-0496">Mitochondrion</keyword>
<keyword id="KW-0520">NAD</keyword>
<keyword id="KW-0679">Respiratory chain</keyword>
<keyword id="KW-1278">Translocase</keyword>
<keyword id="KW-0812">Transmembrane</keyword>
<keyword id="KW-1133">Transmembrane helix</keyword>
<keyword id="KW-0813">Transport</keyword>
<keyword id="KW-0830">Ubiquinone</keyword>
<feature type="chain" id="PRO_0000118480" description="NADH-ubiquinone oxidoreductase chain 4L">
    <location>
        <begin position="1"/>
        <end position="100"/>
    </location>
</feature>
<feature type="transmembrane region" description="Helical" evidence="2">
    <location>
        <begin position="3"/>
        <end position="23"/>
    </location>
</feature>
<feature type="transmembrane region" description="Helical" evidence="2">
    <location>
        <begin position="28"/>
        <end position="48"/>
    </location>
</feature>
<feature type="transmembrane region" description="Helical" evidence="2">
    <location>
        <begin position="61"/>
        <end position="81"/>
    </location>
</feature>
<sequence length="100" mass="11205">MDLSKYLTVSMILFLLGIWGIFLNRKNIIVMLMSIELMLLAVNLNFLLFSVYIDDCIGQLFALLILTVAAAESAIGLALLVVYYRIRGTIAVEFINLMKG</sequence>
<protein>
    <recommendedName>
        <fullName>NADH-ubiquinone oxidoreductase chain 4L</fullName>
        <ecNumber>7.1.1.2</ecNumber>
    </recommendedName>
    <alternativeName>
        <fullName>NADH dehydrogenase subunit 4L</fullName>
    </alternativeName>
</protein>
<name>NU4LM_PROWI</name>
<comment type="function">
    <text evidence="1">Core subunit of the mitochondrial membrane respiratory chain NADH dehydrogenase (Complex I) that is believed to belong to the minimal assembly required for catalysis. Complex I functions in the transfer of electrons from NADH to the respiratory chain. The immediate electron acceptor for the enzyme is believed to be ubiquinone (By similarity).</text>
</comment>
<comment type="catalytic activity">
    <reaction>
        <text>a ubiquinone + NADH + 5 H(+)(in) = a ubiquinol + NAD(+) + 4 H(+)(out)</text>
        <dbReference type="Rhea" id="RHEA:29091"/>
        <dbReference type="Rhea" id="RHEA-COMP:9565"/>
        <dbReference type="Rhea" id="RHEA-COMP:9566"/>
        <dbReference type="ChEBI" id="CHEBI:15378"/>
        <dbReference type="ChEBI" id="CHEBI:16389"/>
        <dbReference type="ChEBI" id="CHEBI:17976"/>
        <dbReference type="ChEBI" id="CHEBI:57540"/>
        <dbReference type="ChEBI" id="CHEBI:57945"/>
        <dbReference type="EC" id="7.1.1.2"/>
    </reaction>
</comment>
<comment type="subunit">
    <text evidence="1">Complex I is composed of about 45 different subunits.</text>
</comment>
<comment type="subcellular location">
    <subcellularLocation>
        <location evidence="1">Mitochondrion membrane</location>
        <topology evidence="1">Multi-pass membrane protein</topology>
    </subcellularLocation>
</comment>
<comment type="similarity">
    <text evidence="3">Belongs to the complex I subunit 4L family.</text>
</comment>
<gene>
    <name type="primary">ND4L</name>
    <name type="synonym">NAD4L</name>
</gene>
<accession>Q37627</accession>
<geneLocation type="mitochondrion"/>
<organism>
    <name type="scientific">Prototheca wickerhamii</name>
    <dbReference type="NCBI Taxonomy" id="3111"/>
    <lineage>
        <taxon>Eukaryota</taxon>
        <taxon>Viridiplantae</taxon>
        <taxon>Chlorophyta</taxon>
        <taxon>core chlorophytes</taxon>
        <taxon>Trebouxiophyceae</taxon>
        <taxon>Chlorellales</taxon>
        <taxon>Chlorellaceae</taxon>
        <taxon>Prototheca</taxon>
    </lineage>
</organism>